<evidence type="ECO:0000255" key="1">
    <source>
        <dbReference type="HAMAP-Rule" id="MF_00736"/>
    </source>
</evidence>
<evidence type="ECO:0000305" key="2"/>
<organism>
    <name type="scientific">Enterococcus faecalis (strain ATCC 700802 / V583)</name>
    <dbReference type="NCBI Taxonomy" id="226185"/>
    <lineage>
        <taxon>Bacteria</taxon>
        <taxon>Bacillati</taxon>
        <taxon>Bacillota</taxon>
        <taxon>Bacilli</taxon>
        <taxon>Lactobacillales</taxon>
        <taxon>Enterococcaceae</taxon>
        <taxon>Enterococcus</taxon>
    </lineage>
</organism>
<reference key="1">
    <citation type="journal article" date="2003" name="Science">
        <title>Role of mobile DNA in the evolution of vancomycin-resistant Enterococcus faecalis.</title>
        <authorList>
            <person name="Paulsen I.T."/>
            <person name="Banerjei L."/>
            <person name="Myers G.S.A."/>
            <person name="Nelson K.E."/>
            <person name="Seshadri R."/>
            <person name="Read T.D."/>
            <person name="Fouts D.E."/>
            <person name="Eisen J.A."/>
            <person name="Gill S.R."/>
            <person name="Heidelberg J.F."/>
            <person name="Tettelin H."/>
            <person name="Dodson R.J."/>
            <person name="Umayam L.A."/>
            <person name="Brinkac L.M."/>
            <person name="Beanan M.J."/>
            <person name="Daugherty S.C."/>
            <person name="DeBoy R.T."/>
            <person name="Durkin S.A."/>
            <person name="Kolonay J.F."/>
            <person name="Madupu R."/>
            <person name="Nelson W.C."/>
            <person name="Vamathevan J.J."/>
            <person name="Tran B."/>
            <person name="Upton J."/>
            <person name="Hansen T."/>
            <person name="Shetty J."/>
            <person name="Khouri H.M."/>
            <person name="Utterback T.R."/>
            <person name="Radune D."/>
            <person name="Ketchum K.A."/>
            <person name="Dougherty B.A."/>
            <person name="Fraser C.M."/>
        </authorList>
    </citation>
    <scope>NUCLEOTIDE SEQUENCE [LARGE SCALE GENOMIC DNA]</scope>
    <source>
        <strain>ATCC 700802 / V583</strain>
    </source>
</reference>
<gene>
    <name evidence="1" type="primary">rplK</name>
    <name type="ordered locus">EF_2719</name>
</gene>
<feature type="chain" id="PRO_0000104286" description="Large ribosomal subunit protein uL11">
    <location>
        <begin position="1"/>
        <end position="140"/>
    </location>
</feature>
<proteinExistence type="inferred from homology"/>
<accession>Q830Q5</accession>
<name>RL11_ENTFA</name>
<dbReference type="EMBL" id="AE016830">
    <property type="protein sequence ID" value="AAO82421.1"/>
    <property type="molecule type" value="Genomic_DNA"/>
</dbReference>
<dbReference type="RefSeq" id="NP_816351.1">
    <property type="nucleotide sequence ID" value="NC_004668.1"/>
</dbReference>
<dbReference type="RefSeq" id="WP_002356424.1">
    <property type="nucleotide sequence ID" value="NZ_KE136528.1"/>
</dbReference>
<dbReference type="SMR" id="Q830Q5"/>
<dbReference type="STRING" id="226185.EF_2719"/>
<dbReference type="EnsemblBacteria" id="AAO82421">
    <property type="protein sequence ID" value="AAO82421"/>
    <property type="gene ID" value="EF_2719"/>
</dbReference>
<dbReference type="GeneID" id="60894706"/>
<dbReference type="KEGG" id="efa:EF2719"/>
<dbReference type="PATRIC" id="fig|226185.45.peg.848"/>
<dbReference type="eggNOG" id="COG0080">
    <property type="taxonomic scope" value="Bacteria"/>
</dbReference>
<dbReference type="HOGENOM" id="CLU_074237_2_1_9"/>
<dbReference type="Proteomes" id="UP000001415">
    <property type="component" value="Chromosome"/>
</dbReference>
<dbReference type="GO" id="GO:0022625">
    <property type="term" value="C:cytosolic large ribosomal subunit"/>
    <property type="evidence" value="ECO:0007669"/>
    <property type="project" value="TreeGrafter"/>
</dbReference>
<dbReference type="GO" id="GO:0070180">
    <property type="term" value="F:large ribosomal subunit rRNA binding"/>
    <property type="evidence" value="ECO:0007669"/>
    <property type="project" value="UniProtKB-UniRule"/>
</dbReference>
<dbReference type="GO" id="GO:0003735">
    <property type="term" value="F:structural constituent of ribosome"/>
    <property type="evidence" value="ECO:0007669"/>
    <property type="project" value="InterPro"/>
</dbReference>
<dbReference type="GO" id="GO:0006412">
    <property type="term" value="P:translation"/>
    <property type="evidence" value="ECO:0007669"/>
    <property type="project" value="UniProtKB-UniRule"/>
</dbReference>
<dbReference type="CDD" id="cd00349">
    <property type="entry name" value="Ribosomal_L11"/>
    <property type="match status" value="1"/>
</dbReference>
<dbReference type="FunFam" id="1.10.10.250:FF:000001">
    <property type="entry name" value="50S ribosomal protein L11"/>
    <property type="match status" value="1"/>
</dbReference>
<dbReference type="FunFam" id="3.30.1550.10:FF:000001">
    <property type="entry name" value="50S ribosomal protein L11"/>
    <property type="match status" value="1"/>
</dbReference>
<dbReference type="Gene3D" id="1.10.10.250">
    <property type="entry name" value="Ribosomal protein L11, C-terminal domain"/>
    <property type="match status" value="1"/>
</dbReference>
<dbReference type="Gene3D" id="3.30.1550.10">
    <property type="entry name" value="Ribosomal protein L11/L12, N-terminal domain"/>
    <property type="match status" value="1"/>
</dbReference>
<dbReference type="HAMAP" id="MF_00736">
    <property type="entry name" value="Ribosomal_uL11"/>
    <property type="match status" value="1"/>
</dbReference>
<dbReference type="InterPro" id="IPR000911">
    <property type="entry name" value="Ribosomal_uL11"/>
</dbReference>
<dbReference type="InterPro" id="IPR006519">
    <property type="entry name" value="Ribosomal_uL11_bac-typ"/>
</dbReference>
<dbReference type="InterPro" id="IPR020783">
    <property type="entry name" value="Ribosomal_uL11_C"/>
</dbReference>
<dbReference type="InterPro" id="IPR036769">
    <property type="entry name" value="Ribosomal_uL11_C_sf"/>
</dbReference>
<dbReference type="InterPro" id="IPR020785">
    <property type="entry name" value="Ribosomal_uL11_CS"/>
</dbReference>
<dbReference type="InterPro" id="IPR020784">
    <property type="entry name" value="Ribosomal_uL11_N"/>
</dbReference>
<dbReference type="InterPro" id="IPR036796">
    <property type="entry name" value="Ribosomal_uL11_N_sf"/>
</dbReference>
<dbReference type="NCBIfam" id="TIGR01632">
    <property type="entry name" value="L11_bact"/>
    <property type="match status" value="1"/>
</dbReference>
<dbReference type="PANTHER" id="PTHR11661">
    <property type="entry name" value="60S RIBOSOMAL PROTEIN L12"/>
    <property type="match status" value="1"/>
</dbReference>
<dbReference type="PANTHER" id="PTHR11661:SF1">
    <property type="entry name" value="LARGE RIBOSOMAL SUBUNIT PROTEIN UL11M"/>
    <property type="match status" value="1"/>
</dbReference>
<dbReference type="Pfam" id="PF00298">
    <property type="entry name" value="Ribosomal_L11"/>
    <property type="match status" value="1"/>
</dbReference>
<dbReference type="Pfam" id="PF03946">
    <property type="entry name" value="Ribosomal_L11_N"/>
    <property type="match status" value="1"/>
</dbReference>
<dbReference type="SMART" id="SM00649">
    <property type="entry name" value="RL11"/>
    <property type="match status" value="1"/>
</dbReference>
<dbReference type="SUPFAM" id="SSF54747">
    <property type="entry name" value="Ribosomal L11/L12e N-terminal domain"/>
    <property type="match status" value="1"/>
</dbReference>
<dbReference type="SUPFAM" id="SSF46906">
    <property type="entry name" value="Ribosomal protein L11, C-terminal domain"/>
    <property type="match status" value="1"/>
</dbReference>
<dbReference type="PROSITE" id="PS00359">
    <property type="entry name" value="RIBOSOMAL_L11"/>
    <property type="match status" value="1"/>
</dbReference>
<protein>
    <recommendedName>
        <fullName evidence="1">Large ribosomal subunit protein uL11</fullName>
    </recommendedName>
    <alternativeName>
        <fullName evidence="2">50S ribosomal protein L11</fullName>
    </alternativeName>
</protein>
<sequence length="140" mass="14690">MAKKVEKIVKLQIPAGKATPAPPVGPALGQAGINIMGFTKEFNARTADQAGLIIPVVISVYEDRSFTFITKTPPAAVLLKKAAKIEKGSGEPNKTKVATVSSDQVKEIAELKMADLNAADVEAAMRMVAGTARSMGIIVE</sequence>
<keyword id="KW-0488">Methylation</keyword>
<keyword id="KW-1185">Reference proteome</keyword>
<keyword id="KW-0687">Ribonucleoprotein</keyword>
<keyword id="KW-0689">Ribosomal protein</keyword>
<keyword id="KW-0694">RNA-binding</keyword>
<keyword id="KW-0699">rRNA-binding</keyword>
<comment type="function">
    <text evidence="1">Forms part of the ribosomal stalk which helps the ribosome interact with GTP-bound translation factors.</text>
</comment>
<comment type="subunit">
    <text evidence="1">Part of the ribosomal stalk of the 50S ribosomal subunit. Interacts with L10 and the large rRNA to form the base of the stalk. L10 forms an elongated spine to which L12 dimers bind in a sequential fashion forming a multimeric L10(L12)X complex.</text>
</comment>
<comment type="PTM">
    <text evidence="1">One or more lysine residues are methylated.</text>
</comment>
<comment type="similarity">
    <text evidence="1">Belongs to the universal ribosomal protein uL11 family.</text>
</comment>